<proteinExistence type="inferred from homology"/>
<feature type="chain" id="PRO_1000022765" description="Trigger factor">
    <location>
        <begin position="1"/>
        <end position="433"/>
    </location>
</feature>
<feature type="domain" description="PPIase FKBP-type" evidence="1">
    <location>
        <begin position="163"/>
        <end position="248"/>
    </location>
</feature>
<reference key="1">
    <citation type="journal article" date="2008" name="Antimicrob. Agents Chemother.">
        <title>Mutated response regulator graR is responsible for phenotypic conversion of Staphylococcus aureus from heterogeneous vancomycin-intermediate resistance to vancomycin-intermediate resistance.</title>
        <authorList>
            <person name="Neoh H.-M."/>
            <person name="Cui L."/>
            <person name="Yuzawa H."/>
            <person name="Takeuchi F."/>
            <person name="Matsuo M."/>
            <person name="Hiramatsu K."/>
        </authorList>
    </citation>
    <scope>NUCLEOTIDE SEQUENCE [LARGE SCALE GENOMIC DNA]</scope>
    <source>
        <strain>Mu3 / ATCC 700698</strain>
    </source>
</reference>
<comment type="function">
    <text evidence="1">Involved in protein export. Acts as a chaperone by maintaining the newly synthesized protein in an open conformation. Functions as a peptidyl-prolyl cis-trans isomerase.</text>
</comment>
<comment type="catalytic activity">
    <reaction evidence="1">
        <text>[protein]-peptidylproline (omega=180) = [protein]-peptidylproline (omega=0)</text>
        <dbReference type="Rhea" id="RHEA:16237"/>
        <dbReference type="Rhea" id="RHEA-COMP:10747"/>
        <dbReference type="Rhea" id="RHEA-COMP:10748"/>
        <dbReference type="ChEBI" id="CHEBI:83833"/>
        <dbReference type="ChEBI" id="CHEBI:83834"/>
        <dbReference type="EC" id="5.2.1.8"/>
    </reaction>
</comment>
<comment type="subcellular location">
    <subcellularLocation>
        <location>Cytoplasm</location>
    </subcellularLocation>
    <text evidence="1">About half TF is bound to the ribosome near the polypeptide exit tunnel while the other half is free in the cytoplasm.</text>
</comment>
<comment type="domain">
    <text evidence="1">Consists of 3 domains; the N-terminus binds the ribosome, the middle domain has PPIase activity, while the C-terminus has intrinsic chaperone activity on its own.</text>
</comment>
<comment type="similarity">
    <text evidence="1">Belongs to the FKBP-type PPIase family. Tig subfamily.</text>
</comment>
<dbReference type="EC" id="5.2.1.8" evidence="1"/>
<dbReference type="EMBL" id="AP009324">
    <property type="protein sequence ID" value="BAF78545.1"/>
    <property type="molecule type" value="Genomic_DNA"/>
</dbReference>
<dbReference type="RefSeq" id="WP_000127573.1">
    <property type="nucleotide sequence ID" value="NZ_CTYB01000017.1"/>
</dbReference>
<dbReference type="SMR" id="A7X397"/>
<dbReference type="KEGG" id="saw:SAHV_1662"/>
<dbReference type="HOGENOM" id="CLU_033058_3_2_9"/>
<dbReference type="GO" id="GO:0005737">
    <property type="term" value="C:cytoplasm"/>
    <property type="evidence" value="ECO:0007669"/>
    <property type="project" value="UniProtKB-SubCell"/>
</dbReference>
<dbReference type="GO" id="GO:0003755">
    <property type="term" value="F:peptidyl-prolyl cis-trans isomerase activity"/>
    <property type="evidence" value="ECO:0007669"/>
    <property type="project" value="UniProtKB-UniRule"/>
</dbReference>
<dbReference type="GO" id="GO:0044183">
    <property type="term" value="F:protein folding chaperone"/>
    <property type="evidence" value="ECO:0007669"/>
    <property type="project" value="TreeGrafter"/>
</dbReference>
<dbReference type="GO" id="GO:0043022">
    <property type="term" value="F:ribosome binding"/>
    <property type="evidence" value="ECO:0007669"/>
    <property type="project" value="TreeGrafter"/>
</dbReference>
<dbReference type="GO" id="GO:0051083">
    <property type="term" value="P:'de novo' cotranslational protein folding"/>
    <property type="evidence" value="ECO:0007669"/>
    <property type="project" value="TreeGrafter"/>
</dbReference>
<dbReference type="GO" id="GO:0051301">
    <property type="term" value="P:cell division"/>
    <property type="evidence" value="ECO:0007669"/>
    <property type="project" value="UniProtKB-KW"/>
</dbReference>
<dbReference type="GO" id="GO:0061077">
    <property type="term" value="P:chaperone-mediated protein folding"/>
    <property type="evidence" value="ECO:0007669"/>
    <property type="project" value="TreeGrafter"/>
</dbReference>
<dbReference type="GO" id="GO:0015031">
    <property type="term" value="P:protein transport"/>
    <property type="evidence" value="ECO:0007669"/>
    <property type="project" value="UniProtKB-UniRule"/>
</dbReference>
<dbReference type="GO" id="GO:0043335">
    <property type="term" value="P:protein unfolding"/>
    <property type="evidence" value="ECO:0007669"/>
    <property type="project" value="TreeGrafter"/>
</dbReference>
<dbReference type="FunFam" id="3.10.50.40:FF:000001">
    <property type="entry name" value="Trigger factor"/>
    <property type="match status" value="1"/>
</dbReference>
<dbReference type="FunFam" id="3.30.70.1050:FF:000002">
    <property type="entry name" value="Trigger factor"/>
    <property type="match status" value="1"/>
</dbReference>
<dbReference type="Gene3D" id="3.10.50.40">
    <property type="match status" value="1"/>
</dbReference>
<dbReference type="Gene3D" id="3.30.70.1050">
    <property type="entry name" value="Trigger factor ribosome-binding domain"/>
    <property type="match status" value="1"/>
</dbReference>
<dbReference type="Gene3D" id="1.10.3120.10">
    <property type="entry name" value="Trigger factor, C-terminal domain"/>
    <property type="match status" value="1"/>
</dbReference>
<dbReference type="HAMAP" id="MF_00303">
    <property type="entry name" value="Trigger_factor_Tig"/>
    <property type="match status" value="1"/>
</dbReference>
<dbReference type="InterPro" id="IPR046357">
    <property type="entry name" value="PPIase_dom_sf"/>
</dbReference>
<dbReference type="InterPro" id="IPR001179">
    <property type="entry name" value="PPIase_FKBP_dom"/>
</dbReference>
<dbReference type="InterPro" id="IPR005215">
    <property type="entry name" value="Trig_fac"/>
</dbReference>
<dbReference type="InterPro" id="IPR008880">
    <property type="entry name" value="Trigger_fac_C"/>
</dbReference>
<dbReference type="InterPro" id="IPR037041">
    <property type="entry name" value="Trigger_fac_C_sf"/>
</dbReference>
<dbReference type="InterPro" id="IPR008881">
    <property type="entry name" value="Trigger_fac_ribosome-bd_bac"/>
</dbReference>
<dbReference type="InterPro" id="IPR036611">
    <property type="entry name" value="Trigger_fac_ribosome-bd_sf"/>
</dbReference>
<dbReference type="InterPro" id="IPR027304">
    <property type="entry name" value="Trigger_fact/SurA_dom_sf"/>
</dbReference>
<dbReference type="NCBIfam" id="TIGR00115">
    <property type="entry name" value="tig"/>
    <property type="match status" value="1"/>
</dbReference>
<dbReference type="PANTHER" id="PTHR30560">
    <property type="entry name" value="TRIGGER FACTOR CHAPERONE AND PEPTIDYL-PROLYL CIS/TRANS ISOMERASE"/>
    <property type="match status" value="1"/>
</dbReference>
<dbReference type="PANTHER" id="PTHR30560:SF3">
    <property type="entry name" value="TRIGGER FACTOR-LIKE PROTEIN TIG, CHLOROPLASTIC"/>
    <property type="match status" value="1"/>
</dbReference>
<dbReference type="Pfam" id="PF00254">
    <property type="entry name" value="FKBP_C"/>
    <property type="match status" value="1"/>
</dbReference>
<dbReference type="Pfam" id="PF05698">
    <property type="entry name" value="Trigger_C"/>
    <property type="match status" value="1"/>
</dbReference>
<dbReference type="Pfam" id="PF05697">
    <property type="entry name" value="Trigger_N"/>
    <property type="match status" value="1"/>
</dbReference>
<dbReference type="PIRSF" id="PIRSF003095">
    <property type="entry name" value="Trigger_factor"/>
    <property type="match status" value="1"/>
</dbReference>
<dbReference type="SUPFAM" id="SSF54534">
    <property type="entry name" value="FKBP-like"/>
    <property type="match status" value="1"/>
</dbReference>
<dbReference type="SUPFAM" id="SSF109998">
    <property type="entry name" value="Triger factor/SurA peptide-binding domain-like"/>
    <property type="match status" value="1"/>
</dbReference>
<dbReference type="SUPFAM" id="SSF102735">
    <property type="entry name" value="Trigger factor ribosome-binding domain"/>
    <property type="match status" value="1"/>
</dbReference>
<dbReference type="PROSITE" id="PS50059">
    <property type="entry name" value="FKBP_PPIASE"/>
    <property type="match status" value="1"/>
</dbReference>
<evidence type="ECO:0000255" key="1">
    <source>
        <dbReference type="HAMAP-Rule" id="MF_00303"/>
    </source>
</evidence>
<organism>
    <name type="scientific">Staphylococcus aureus (strain Mu3 / ATCC 700698)</name>
    <dbReference type="NCBI Taxonomy" id="418127"/>
    <lineage>
        <taxon>Bacteria</taxon>
        <taxon>Bacillati</taxon>
        <taxon>Bacillota</taxon>
        <taxon>Bacilli</taxon>
        <taxon>Bacillales</taxon>
        <taxon>Staphylococcaceae</taxon>
        <taxon>Staphylococcus</taxon>
    </lineage>
</organism>
<accession>A7X397</accession>
<keyword id="KW-0131">Cell cycle</keyword>
<keyword id="KW-0132">Cell division</keyword>
<keyword id="KW-0143">Chaperone</keyword>
<keyword id="KW-0963">Cytoplasm</keyword>
<keyword id="KW-0413">Isomerase</keyword>
<keyword id="KW-0697">Rotamase</keyword>
<gene>
    <name evidence="1" type="primary">tig</name>
    <name type="ordered locus">SAHV_1662</name>
</gene>
<name>TIG_STAA1</name>
<protein>
    <recommendedName>
        <fullName evidence="1">Trigger factor</fullName>
        <shortName evidence="1">TF</shortName>
        <ecNumber evidence="1">5.2.1.8</ecNumber>
    </recommendedName>
    <alternativeName>
        <fullName evidence="1">PPIase</fullName>
    </alternativeName>
</protein>
<sequence>MTATWEKKEGNEGLLTVTVPAEKVNKALDQAFKKVVKQINVPGFRKGKVPRPIFEQRFGVEALYQDAIDILLPDAYGEAIDETDIKPVAQPEVSVTQIEKGKDFIFEATVTVEPEVKLGDYKGLEIEKQETELSDDELQEAIDHSLGHLAEMVVKEDGVVENGDTVNIDFSGSVDGEEFEGGQAEGYDLEIGSGSFIPGFEEQLEGMKVDEEKDVVVTFPEEYHAEELAGKEATFKTKVNEIKFKEVPELTDEIANELDAEANTVDEYKENLRKRLAEQKATDAENVEKEEAITKATDNTTIDIPEAMVNTELDRMVSEFAQRIQQQGLDLQTYFQISGQDETQLREQMKDDAEQRVKTNLTLTAIAEAEKIEATDEDIDKELEKMSKQFNISVEDIKNTLGNTDIIKNDVRIQKVIDLLRDNAKFVEGTKED</sequence>